<geneLocation type="plasmid">
    <name>pSymA</name>
    <name>megaplasmid 1</name>
</geneLocation>
<dbReference type="EC" id="3.5.1.-"/>
<dbReference type="EMBL" id="M11268">
    <property type="protein sequence ID" value="AAA98361.1"/>
    <property type="molecule type" value="Genomic_DNA"/>
</dbReference>
<dbReference type="EMBL" id="X01649">
    <property type="protein sequence ID" value="CAA25809.1"/>
    <property type="molecule type" value="Genomic_DNA"/>
</dbReference>
<dbReference type="EMBL" id="AF038577">
    <property type="protein sequence ID" value="AAB95330.1"/>
    <property type="molecule type" value="Genomic_DNA"/>
</dbReference>
<dbReference type="EMBL" id="AE006469">
    <property type="protein sequence ID" value="AAK65132.1"/>
    <property type="molecule type" value="Genomic_DNA"/>
</dbReference>
<dbReference type="PIR" id="A03483">
    <property type="entry name" value="ZZZRBM"/>
</dbReference>
<dbReference type="PIR" id="A03484">
    <property type="entry name" value="ZZZRB4"/>
</dbReference>
<dbReference type="PIR" id="B95321">
    <property type="entry name" value="B95321"/>
</dbReference>
<dbReference type="RefSeq" id="NP_435720.1">
    <property type="nucleotide sequence ID" value="NC_003037.1"/>
</dbReference>
<dbReference type="RefSeq" id="WP_003532851.1">
    <property type="nucleotide sequence ID" value="NC_003037.1"/>
</dbReference>
<dbReference type="SMR" id="P02963"/>
<dbReference type="EnsemblBacteria" id="AAK65132">
    <property type="protein sequence ID" value="AAK65132"/>
    <property type="gene ID" value="SMa0868"/>
</dbReference>
<dbReference type="KEGG" id="sme:SMa0868"/>
<dbReference type="PATRIC" id="fig|266834.11.peg.485"/>
<dbReference type="HOGENOM" id="CLU_021264_0_0_5"/>
<dbReference type="OrthoDB" id="9784220at2"/>
<dbReference type="BRENDA" id="3.5.1.41">
    <property type="organism ID" value="5347"/>
</dbReference>
<dbReference type="PRO" id="PR:P02963"/>
<dbReference type="Proteomes" id="UP000001976">
    <property type="component" value="Plasmid pSymA"/>
</dbReference>
<dbReference type="GO" id="GO:0005737">
    <property type="term" value="C:cytoplasm"/>
    <property type="evidence" value="ECO:0007669"/>
    <property type="project" value="UniProtKB-SubCell"/>
</dbReference>
<dbReference type="GO" id="GO:0016020">
    <property type="term" value="C:membrane"/>
    <property type="evidence" value="ECO:0007669"/>
    <property type="project" value="TreeGrafter"/>
</dbReference>
<dbReference type="GO" id="GO:0016810">
    <property type="term" value="F:hydrolase activity, acting on carbon-nitrogen (but not peptide) bonds"/>
    <property type="evidence" value="ECO:0007669"/>
    <property type="project" value="InterPro"/>
</dbReference>
<dbReference type="GO" id="GO:0046872">
    <property type="term" value="F:metal ion binding"/>
    <property type="evidence" value="ECO:0007669"/>
    <property type="project" value="UniProtKB-KW"/>
</dbReference>
<dbReference type="GO" id="GO:0005975">
    <property type="term" value="P:carbohydrate metabolic process"/>
    <property type="evidence" value="ECO:0007669"/>
    <property type="project" value="InterPro"/>
</dbReference>
<dbReference type="Gene3D" id="3.20.20.370">
    <property type="entry name" value="Glycoside hydrolase/deacetylase"/>
    <property type="match status" value="1"/>
</dbReference>
<dbReference type="InterPro" id="IPR011330">
    <property type="entry name" value="Glyco_hydro/deAcase_b/a-brl"/>
</dbReference>
<dbReference type="InterPro" id="IPR002509">
    <property type="entry name" value="NODB_dom"/>
</dbReference>
<dbReference type="InterPro" id="IPR026402">
    <property type="entry name" value="Nodulat_NodB"/>
</dbReference>
<dbReference type="InterPro" id="IPR050248">
    <property type="entry name" value="Polysacc_deacetylase_ArnD"/>
</dbReference>
<dbReference type="NCBIfam" id="TIGR04243">
    <property type="entry name" value="nodulat_NodB"/>
    <property type="match status" value="1"/>
</dbReference>
<dbReference type="PANTHER" id="PTHR10587:SF133">
    <property type="entry name" value="CHITIN DEACETYLASE 1-RELATED"/>
    <property type="match status" value="1"/>
</dbReference>
<dbReference type="PANTHER" id="PTHR10587">
    <property type="entry name" value="GLYCOSYL TRANSFERASE-RELATED"/>
    <property type="match status" value="1"/>
</dbReference>
<dbReference type="Pfam" id="PF01522">
    <property type="entry name" value="Polysacc_deac_1"/>
    <property type="match status" value="1"/>
</dbReference>
<dbReference type="SUPFAM" id="SSF88713">
    <property type="entry name" value="Glycoside hydrolase/deacetylase"/>
    <property type="match status" value="1"/>
</dbReference>
<dbReference type="PROSITE" id="PS51677">
    <property type="entry name" value="NODB"/>
    <property type="match status" value="1"/>
</dbReference>
<organism>
    <name type="scientific">Rhizobium meliloti (strain 1021)</name>
    <name type="common">Ensifer meliloti</name>
    <name type="synonym">Sinorhizobium meliloti</name>
    <dbReference type="NCBI Taxonomy" id="266834"/>
    <lineage>
        <taxon>Bacteria</taxon>
        <taxon>Pseudomonadati</taxon>
        <taxon>Pseudomonadota</taxon>
        <taxon>Alphaproteobacteria</taxon>
        <taxon>Hyphomicrobiales</taxon>
        <taxon>Rhizobiaceae</taxon>
        <taxon>Sinorhizobium/Ensifer group</taxon>
        <taxon>Sinorhizobium</taxon>
    </lineage>
</organism>
<keyword id="KW-0963">Cytoplasm</keyword>
<keyword id="KW-0378">Hydrolase</keyword>
<keyword id="KW-0479">Metal-binding</keyword>
<keyword id="KW-0536">Nodulation</keyword>
<keyword id="KW-0614">Plasmid</keyword>
<keyword id="KW-1185">Reference proteome</keyword>
<protein>
    <recommendedName>
        <fullName>Chitooligosaccharide deacetylase</fullName>
        <ecNumber>3.5.1.-</ecNumber>
    </recommendedName>
    <alternativeName>
        <fullName>Nodulation protein B</fullName>
    </alternativeName>
</protein>
<feature type="chain" id="PRO_0000172755" description="Chitooligosaccharide deacetylase">
    <location>
        <begin position="1"/>
        <end position="217"/>
    </location>
</feature>
<feature type="domain" description="NodB homology" evidence="2">
    <location>
        <begin position="21"/>
        <end position="211"/>
    </location>
</feature>
<feature type="active site" description="Proton acceptor" evidence="1">
    <location>
        <position position="28"/>
    </location>
</feature>
<feature type="active site" description="Proton donor" evidence="1">
    <location>
        <position position="174"/>
    </location>
</feature>
<feature type="binding site" evidence="1">
    <location>
        <position position="79"/>
    </location>
    <ligand>
        <name>a divalent metal cation</name>
        <dbReference type="ChEBI" id="CHEBI:60240"/>
    </ligand>
</feature>
<feature type="binding site" evidence="1">
    <location>
        <position position="83"/>
    </location>
    <ligand>
        <name>a divalent metal cation</name>
        <dbReference type="ChEBI" id="CHEBI:60240"/>
    </ligand>
</feature>
<feature type="site" description="Raises pKa of active site His" evidence="1">
    <location>
        <position position="148"/>
    </location>
</feature>
<feature type="sequence variant" description="In strain: 41.">
    <original>V</original>
    <variation>M</variation>
    <location>
        <position position="10"/>
    </location>
</feature>
<feature type="sequence variant" description="In strain: 41.">
    <original>A</original>
    <variation>T</variation>
    <location>
        <position position="59"/>
    </location>
</feature>
<feature type="sequence variant" description="In strain: 41.">
    <original>H</original>
    <variation>R</variation>
    <location>
        <position position="116"/>
    </location>
</feature>
<feature type="sequence variant" description="In strain: O42B.">
    <original>ALSR</original>
    <variation>GFPV</variation>
    <location>
        <begin position="195"/>
        <end position="198"/>
    </location>
</feature>
<feature type="sequence conflict" description="In Ref. 1; AAA98361." evidence="3" ref="1">
    <original>ACPQAAVRHIR</original>
    <variation>LVLRPRSDTYE</variation>
    <location>
        <begin position="108"/>
        <end position="118"/>
    </location>
</feature>
<proteinExistence type="inferred from homology"/>
<evidence type="ECO:0000250" key="1"/>
<evidence type="ECO:0000255" key="2">
    <source>
        <dbReference type="PROSITE-ProRule" id="PRU01014"/>
    </source>
</evidence>
<evidence type="ECO:0000305" key="3"/>
<accession>P02963</accession>
<accession>O52477</accession>
<sequence length="217" mass="23672">MKHLDYIHEVPSNCDYGTEDRSIYLTFDDGPNPHCTPEILDVLAEYGVPATFFVIGTYAKSQPELIRRIVAEGHEVANHTMTHPDLSTCGPHEVEREIVEASEAIIAACPQAAVRHIRAPYGVWSEEALTRSASAGLTAIHWSADPRDWSRPGANAIVDAVLDSVRPGAIVLLHDGCPPDESGALTGLRDQTLMALSRIVPALHERGFAIRPLPPHH</sequence>
<gene>
    <name type="primary">nodB</name>
    <name type="ordered locus">RA0474</name>
    <name type="ORF">SMa0868</name>
</gene>
<name>NODB_RHIME</name>
<reference key="1">
    <citation type="journal article" date="1985" name="DNA">
        <title>Nucleotide sequence of Rhizobium meliloti 1021 nodulation genes: nodD is read divergently from nodABC.</title>
        <authorList>
            <person name="Egelhoff T.T."/>
            <person name="Fisher R.F."/>
            <person name="Jacobs T.W."/>
            <person name="Mulligan J.T."/>
            <person name="Long S.R."/>
        </authorList>
    </citation>
    <scope>NUCLEOTIDE SEQUENCE [GENOMIC DNA]</scope>
    <source>
        <strain>1021</strain>
    </source>
</reference>
<reference key="2">
    <citation type="journal article" date="1984" name="Nucleic Acids Res.">
        <title>Nucleotide sequence of Rhizobium meliloti nodulation genes.</title>
        <authorList>
            <person name="Toeroek I."/>
            <person name="Kondorosi E."/>
            <person name="Stepkowski T."/>
            <person name="Posfai J."/>
            <person name="Kondorosi A."/>
        </authorList>
    </citation>
    <scope>NUCLEOTIDE SEQUENCE [GENOMIC DNA]</scope>
    <source>
        <strain>41</strain>
    </source>
</reference>
<reference key="3">
    <citation type="submission" date="1997-12" db="EMBL/GenBank/DDBJ databases">
        <title>The complete sequence of S. meliloti 042B nodABC.</title>
        <authorList>
            <person name="Yang X."/>
            <person name="Gao W.M."/>
            <person name="Yang S.S."/>
        </authorList>
    </citation>
    <scope>NUCLEOTIDE SEQUENCE [GENOMIC DNA]</scope>
    <source>
        <strain>042B</strain>
    </source>
</reference>
<reference key="4">
    <citation type="journal article" date="2001" name="Proc. Natl. Acad. Sci. U.S.A.">
        <title>Nucleotide sequence and predicted functions of the entire Sinorhizobium meliloti pSymA megaplasmid.</title>
        <authorList>
            <person name="Barnett M.J."/>
            <person name="Fisher R.F."/>
            <person name="Jones T."/>
            <person name="Komp C."/>
            <person name="Abola A.P."/>
            <person name="Barloy-Hubler F."/>
            <person name="Bowser L."/>
            <person name="Capela D."/>
            <person name="Galibert F."/>
            <person name="Gouzy J."/>
            <person name="Gurjal M."/>
            <person name="Hong A."/>
            <person name="Huizar L."/>
            <person name="Hyman R.W."/>
            <person name="Kahn D."/>
            <person name="Kahn M.L."/>
            <person name="Kalman S."/>
            <person name="Keating D.H."/>
            <person name="Palm C."/>
            <person name="Peck M.C."/>
            <person name="Surzycki R."/>
            <person name="Wells D.H."/>
            <person name="Yeh K.-C."/>
            <person name="Davis R.W."/>
            <person name="Federspiel N.A."/>
            <person name="Long S.R."/>
        </authorList>
    </citation>
    <scope>NUCLEOTIDE SEQUENCE [LARGE SCALE GENOMIC DNA]</scope>
    <source>
        <strain>1021</strain>
    </source>
</reference>
<reference key="5">
    <citation type="journal article" date="2001" name="Science">
        <title>The composite genome of the legume symbiont Sinorhizobium meliloti.</title>
        <authorList>
            <person name="Galibert F."/>
            <person name="Finan T.M."/>
            <person name="Long S.R."/>
            <person name="Puehler A."/>
            <person name="Abola P."/>
            <person name="Ampe F."/>
            <person name="Barloy-Hubler F."/>
            <person name="Barnett M.J."/>
            <person name="Becker A."/>
            <person name="Boistard P."/>
            <person name="Bothe G."/>
            <person name="Boutry M."/>
            <person name="Bowser L."/>
            <person name="Buhrmester J."/>
            <person name="Cadieu E."/>
            <person name="Capela D."/>
            <person name="Chain P."/>
            <person name="Cowie A."/>
            <person name="Davis R.W."/>
            <person name="Dreano S."/>
            <person name="Federspiel N.A."/>
            <person name="Fisher R.F."/>
            <person name="Gloux S."/>
            <person name="Godrie T."/>
            <person name="Goffeau A."/>
            <person name="Golding B."/>
            <person name="Gouzy J."/>
            <person name="Gurjal M."/>
            <person name="Hernandez-Lucas I."/>
            <person name="Hong A."/>
            <person name="Huizar L."/>
            <person name="Hyman R.W."/>
            <person name="Jones T."/>
            <person name="Kahn D."/>
            <person name="Kahn M.L."/>
            <person name="Kalman S."/>
            <person name="Keating D.H."/>
            <person name="Kiss E."/>
            <person name="Komp C."/>
            <person name="Lelaure V."/>
            <person name="Masuy D."/>
            <person name="Palm C."/>
            <person name="Peck M.C."/>
            <person name="Pohl T.M."/>
            <person name="Portetelle D."/>
            <person name="Purnelle B."/>
            <person name="Ramsperger U."/>
            <person name="Surzycki R."/>
            <person name="Thebault P."/>
            <person name="Vandenbol M."/>
            <person name="Vorhoelter F.J."/>
            <person name="Weidner S."/>
            <person name="Wells D.H."/>
            <person name="Wong K."/>
            <person name="Yeh K.-C."/>
            <person name="Batut J."/>
        </authorList>
    </citation>
    <scope>NUCLEOTIDE SEQUENCE [LARGE SCALE GENOMIC DNA]</scope>
    <source>
        <strain>1021</strain>
    </source>
</reference>
<comment type="function">
    <text>Is involved in generating a small heat-stable compound (Nod), an acylated oligomer of N-acetylglucosamine, that stimulates mitosis in various plant protoplasts.</text>
</comment>
<comment type="subcellular location">
    <subcellularLocation>
        <location>Cytoplasm</location>
    </subcellularLocation>
</comment>
<comment type="similarity">
    <text evidence="3">Belongs to the polysaccharide deacetylase family.</text>
</comment>